<keyword id="KW-0227">DNA damage</keyword>
<keyword id="KW-0234">DNA repair</keyword>
<keyword id="KW-0255">Endonuclease</keyword>
<keyword id="KW-0378">Hydrolase</keyword>
<keyword id="KW-0479">Metal-binding</keyword>
<keyword id="KW-0540">Nuclease</keyword>
<keyword id="KW-0862">Zinc</keyword>
<comment type="function">
    <text evidence="1">Endonuclease IV plays a role in DNA repair. It cleaves phosphodiester bonds at apurinic or apyrimidinic (AP) sites, generating a 3'-hydroxyl group and a 5'-terminal sugar phosphate.</text>
</comment>
<comment type="catalytic activity">
    <reaction evidence="1">
        <text>Endonucleolytic cleavage to 5'-phosphooligonucleotide end-products.</text>
        <dbReference type="EC" id="3.1.21.2"/>
    </reaction>
</comment>
<comment type="cofactor">
    <cofactor evidence="1">
        <name>Zn(2+)</name>
        <dbReference type="ChEBI" id="CHEBI:29105"/>
    </cofactor>
    <text evidence="1">Binds 3 Zn(2+) ions.</text>
</comment>
<comment type="similarity">
    <text evidence="1">Belongs to the AP endonuclease 2 family.</text>
</comment>
<dbReference type="EC" id="3.1.21.2" evidence="1"/>
<dbReference type="EMBL" id="CU928164">
    <property type="protein sequence ID" value="CAR18425.1"/>
    <property type="molecule type" value="Genomic_DNA"/>
</dbReference>
<dbReference type="RefSeq" id="WP_000873880.1">
    <property type="nucleotide sequence ID" value="NC_011750.1"/>
</dbReference>
<dbReference type="RefSeq" id="YP_002408259.1">
    <property type="nucleotide sequence ID" value="NC_011750.1"/>
</dbReference>
<dbReference type="SMR" id="B7NMX3"/>
<dbReference type="STRING" id="585057.ECIAI39_2299"/>
<dbReference type="GeneID" id="86947100"/>
<dbReference type="KEGG" id="ect:ECIAI39_2299"/>
<dbReference type="PATRIC" id="fig|585057.6.peg.2393"/>
<dbReference type="HOGENOM" id="CLU_025885_0_4_6"/>
<dbReference type="Proteomes" id="UP000000749">
    <property type="component" value="Chromosome"/>
</dbReference>
<dbReference type="GO" id="GO:0008833">
    <property type="term" value="F:deoxyribonuclease IV (phage-T4-induced) activity"/>
    <property type="evidence" value="ECO:0007669"/>
    <property type="project" value="UniProtKB-UniRule"/>
</dbReference>
<dbReference type="GO" id="GO:0003677">
    <property type="term" value="F:DNA binding"/>
    <property type="evidence" value="ECO:0007669"/>
    <property type="project" value="InterPro"/>
</dbReference>
<dbReference type="GO" id="GO:0003906">
    <property type="term" value="F:DNA-(apurinic or apyrimidinic site) endonuclease activity"/>
    <property type="evidence" value="ECO:0007669"/>
    <property type="project" value="TreeGrafter"/>
</dbReference>
<dbReference type="GO" id="GO:0008081">
    <property type="term" value="F:phosphoric diester hydrolase activity"/>
    <property type="evidence" value="ECO:0007669"/>
    <property type="project" value="TreeGrafter"/>
</dbReference>
<dbReference type="GO" id="GO:0008270">
    <property type="term" value="F:zinc ion binding"/>
    <property type="evidence" value="ECO:0007669"/>
    <property type="project" value="UniProtKB-UniRule"/>
</dbReference>
<dbReference type="GO" id="GO:0006284">
    <property type="term" value="P:base-excision repair"/>
    <property type="evidence" value="ECO:0007669"/>
    <property type="project" value="TreeGrafter"/>
</dbReference>
<dbReference type="CDD" id="cd00019">
    <property type="entry name" value="AP2Ec"/>
    <property type="match status" value="1"/>
</dbReference>
<dbReference type="FunFam" id="3.20.20.150:FF:000001">
    <property type="entry name" value="Probable endonuclease 4"/>
    <property type="match status" value="1"/>
</dbReference>
<dbReference type="Gene3D" id="3.20.20.150">
    <property type="entry name" value="Divalent-metal-dependent TIM barrel enzymes"/>
    <property type="match status" value="1"/>
</dbReference>
<dbReference type="HAMAP" id="MF_00152">
    <property type="entry name" value="Nfo"/>
    <property type="match status" value="1"/>
</dbReference>
<dbReference type="InterPro" id="IPR001719">
    <property type="entry name" value="AP_endonuc_2"/>
</dbReference>
<dbReference type="InterPro" id="IPR018246">
    <property type="entry name" value="AP_endonuc_F2_Zn_BS"/>
</dbReference>
<dbReference type="InterPro" id="IPR036237">
    <property type="entry name" value="Xyl_isomerase-like_sf"/>
</dbReference>
<dbReference type="InterPro" id="IPR013022">
    <property type="entry name" value="Xyl_isomerase-like_TIM-brl"/>
</dbReference>
<dbReference type="NCBIfam" id="TIGR00587">
    <property type="entry name" value="nfo"/>
    <property type="match status" value="1"/>
</dbReference>
<dbReference type="NCBIfam" id="NF002199">
    <property type="entry name" value="PRK01060.1-4"/>
    <property type="match status" value="1"/>
</dbReference>
<dbReference type="PANTHER" id="PTHR21445:SF0">
    <property type="entry name" value="APURINIC-APYRIMIDINIC ENDONUCLEASE"/>
    <property type="match status" value="1"/>
</dbReference>
<dbReference type="PANTHER" id="PTHR21445">
    <property type="entry name" value="ENDONUCLEASE IV ENDODEOXYRIBONUCLEASE IV"/>
    <property type="match status" value="1"/>
</dbReference>
<dbReference type="Pfam" id="PF01261">
    <property type="entry name" value="AP_endonuc_2"/>
    <property type="match status" value="1"/>
</dbReference>
<dbReference type="SMART" id="SM00518">
    <property type="entry name" value="AP2Ec"/>
    <property type="match status" value="1"/>
</dbReference>
<dbReference type="SUPFAM" id="SSF51658">
    <property type="entry name" value="Xylose isomerase-like"/>
    <property type="match status" value="1"/>
</dbReference>
<dbReference type="PROSITE" id="PS00729">
    <property type="entry name" value="AP_NUCLEASE_F2_1"/>
    <property type="match status" value="1"/>
</dbReference>
<dbReference type="PROSITE" id="PS00730">
    <property type="entry name" value="AP_NUCLEASE_F2_2"/>
    <property type="match status" value="1"/>
</dbReference>
<dbReference type="PROSITE" id="PS00731">
    <property type="entry name" value="AP_NUCLEASE_F2_3"/>
    <property type="match status" value="1"/>
</dbReference>
<dbReference type="PROSITE" id="PS51432">
    <property type="entry name" value="AP_NUCLEASE_F2_4"/>
    <property type="match status" value="1"/>
</dbReference>
<protein>
    <recommendedName>
        <fullName evidence="1">Probable endonuclease 4</fullName>
        <ecNumber evidence="1">3.1.21.2</ecNumber>
    </recommendedName>
    <alternativeName>
        <fullName evidence="1">Endodeoxyribonuclease IV</fullName>
    </alternativeName>
    <alternativeName>
        <fullName evidence="1">Endonuclease IV</fullName>
    </alternativeName>
</protein>
<name>END4_ECO7I</name>
<proteinExistence type="inferred from homology"/>
<organism>
    <name type="scientific">Escherichia coli O7:K1 (strain IAI39 / ExPEC)</name>
    <dbReference type="NCBI Taxonomy" id="585057"/>
    <lineage>
        <taxon>Bacteria</taxon>
        <taxon>Pseudomonadati</taxon>
        <taxon>Pseudomonadota</taxon>
        <taxon>Gammaproteobacteria</taxon>
        <taxon>Enterobacterales</taxon>
        <taxon>Enterobacteriaceae</taxon>
        <taxon>Escherichia</taxon>
    </lineage>
</organism>
<evidence type="ECO:0000255" key="1">
    <source>
        <dbReference type="HAMAP-Rule" id="MF_00152"/>
    </source>
</evidence>
<sequence length="285" mass="31462">MKYIGAHVSAAGGLANAAIRAAEIDATAFALFTKNQRQWRAAPLTTQTIDEFKAACEKYHYTSAQILPHDSYLINLGHPVAEALEKSRDAFIDEMQRCEQLGLSLLNFHPGSHLMQISEEDCLARIAESINIALDKTQGVTAVIENTAGQGSNLGFKFEHLAAIIDGVEDKSRVGVCIDTCHAFAAGYDLRTPAECEKTFADFARIVGFKYLRGMHLNDAKSTFGSRVDRHHSLGEGNIGHDAFRWIMQDDRFDGIPLILETINPDIWAEEIAWLKAQQTEKAVA</sequence>
<accession>B7NMX3</accession>
<feature type="chain" id="PRO_1000118094" description="Probable endonuclease 4">
    <location>
        <begin position="1"/>
        <end position="285"/>
    </location>
</feature>
<feature type="binding site" evidence="1">
    <location>
        <position position="69"/>
    </location>
    <ligand>
        <name>Zn(2+)</name>
        <dbReference type="ChEBI" id="CHEBI:29105"/>
        <label>1</label>
    </ligand>
</feature>
<feature type="binding site" evidence="1">
    <location>
        <position position="109"/>
    </location>
    <ligand>
        <name>Zn(2+)</name>
        <dbReference type="ChEBI" id="CHEBI:29105"/>
        <label>1</label>
    </ligand>
</feature>
<feature type="binding site" evidence="1">
    <location>
        <position position="145"/>
    </location>
    <ligand>
        <name>Zn(2+)</name>
        <dbReference type="ChEBI" id="CHEBI:29105"/>
        <label>1</label>
    </ligand>
</feature>
<feature type="binding site" evidence="1">
    <location>
        <position position="145"/>
    </location>
    <ligand>
        <name>Zn(2+)</name>
        <dbReference type="ChEBI" id="CHEBI:29105"/>
        <label>2</label>
    </ligand>
</feature>
<feature type="binding site" evidence="1">
    <location>
        <position position="179"/>
    </location>
    <ligand>
        <name>Zn(2+)</name>
        <dbReference type="ChEBI" id="CHEBI:29105"/>
        <label>2</label>
    </ligand>
</feature>
<feature type="binding site" evidence="1">
    <location>
        <position position="182"/>
    </location>
    <ligand>
        <name>Zn(2+)</name>
        <dbReference type="ChEBI" id="CHEBI:29105"/>
        <label>3</label>
    </ligand>
</feature>
<feature type="binding site" evidence="1">
    <location>
        <position position="216"/>
    </location>
    <ligand>
        <name>Zn(2+)</name>
        <dbReference type="ChEBI" id="CHEBI:29105"/>
        <label>2</label>
    </ligand>
</feature>
<feature type="binding site" evidence="1">
    <location>
        <position position="229"/>
    </location>
    <ligand>
        <name>Zn(2+)</name>
        <dbReference type="ChEBI" id="CHEBI:29105"/>
        <label>3</label>
    </ligand>
</feature>
<feature type="binding site" evidence="1">
    <location>
        <position position="231"/>
    </location>
    <ligand>
        <name>Zn(2+)</name>
        <dbReference type="ChEBI" id="CHEBI:29105"/>
        <label>3</label>
    </ligand>
</feature>
<feature type="binding site" evidence="1">
    <location>
        <position position="261"/>
    </location>
    <ligand>
        <name>Zn(2+)</name>
        <dbReference type="ChEBI" id="CHEBI:29105"/>
        <label>2</label>
    </ligand>
</feature>
<reference key="1">
    <citation type="journal article" date="2009" name="PLoS Genet.">
        <title>Organised genome dynamics in the Escherichia coli species results in highly diverse adaptive paths.</title>
        <authorList>
            <person name="Touchon M."/>
            <person name="Hoede C."/>
            <person name="Tenaillon O."/>
            <person name="Barbe V."/>
            <person name="Baeriswyl S."/>
            <person name="Bidet P."/>
            <person name="Bingen E."/>
            <person name="Bonacorsi S."/>
            <person name="Bouchier C."/>
            <person name="Bouvet O."/>
            <person name="Calteau A."/>
            <person name="Chiapello H."/>
            <person name="Clermont O."/>
            <person name="Cruveiller S."/>
            <person name="Danchin A."/>
            <person name="Diard M."/>
            <person name="Dossat C."/>
            <person name="Karoui M.E."/>
            <person name="Frapy E."/>
            <person name="Garry L."/>
            <person name="Ghigo J.M."/>
            <person name="Gilles A.M."/>
            <person name="Johnson J."/>
            <person name="Le Bouguenec C."/>
            <person name="Lescat M."/>
            <person name="Mangenot S."/>
            <person name="Martinez-Jehanne V."/>
            <person name="Matic I."/>
            <person name="Nassif X."/>
            <person name="Oztas S."/>
            <person name="Petit M.A."/>
            <person name="Pichon C."/>
            <person name="Rouy Z."/>
            <person name="Ruf C.S."/>
            <person name="Schneider D."/>
            <person name="Tourret J."/>
            <person name="Vacherie B."/>
            <person name="Vallenet D."/>
            <person name="Medigue C."/>
            <person name="Rocha E.P.C."/>
            <person name="Denamur E."/>
        </authorList>
    </citation>
    <scope>NUCLEOTIDE SEQUENCE [LARGE SCALE GENOMIC DNA]</scope>
    <source>
        <strain>IAI39 / ExPEC</strain>
    </source>
</reference>
<gene>
    <name evidence="1" type="primary">nfo</name>
    <name type="ordered locus">ECIAI39_2299</name>
</gene>